<organism>
    <name type="scientific">Meyerozyma guilliermondii (strain ATCC 6260 / CBS 566 / DSM 6381 / JCM 1539 / NBRC 10279 / NRRL Y-324)</name>
    <name type="common">Yeast</name>
    <name type="synonym">Candida guilliermondii</name>
    <dbReference type="NCBI Taxonomy" id="294746"/>
    <lineage>
        <taxon>Eukaryota</taxon>
        <taxon>Fungi</taxon>
        <taxon>Dikarya</taxon>
        <taxon>Ascomycota</taxon>
        <taxon>Saccharomycotina</taxon>
        <taxon>Pichiomycetes</taxon>
        <taxon>Debaryomycetaceae</taxon>
        <taxon>Meyerozyma</taxon>
    </lineage>
</organism>
<keyword id="KW-0378">Hydrolase</keyword>
<keyword id="KW-0904">Protein phosphatase</keyword>
<keyword id="KW-1185">Reference proteome</keyword>
<name>POA1_PICGU</name>
<dbReference type="EC" id="3.1.3.84"/>
<dbReference type="EMBL" id="CH408162">
    <property type="protein sequence ID" value="EDK41606.2"/>
    <property type="molecule type" value="Genomic_DNA"/>
</dbReference>
<dbReference type="RefSeq" id="XP_001481941.1">
    <property type="nucleotide sequence ID" value="XM_001481891.1"/>
</dbReference>
<dbReference type="SMR" id="A5DR03"/>
<dbReference type="FunCoup" id="A5DR03">
    <property type="interactions" value="6"/>
</dbReference>
<dbReference type="GeneID" id="5123896"/>
<dbReference type="KEGG" id="pgu:PGUG_05704"/>
<dbReference type="VEuPathDB" id="FungiDB:PGUG_05704"/>
<dbReference type="eggNOG" id="ENOG502S60W">
    <property type="taxonomic scope" value="Eukaryota"/>
</dbReference>
<dbReference type="HOGENOM" id="CLU_054419_1_2_1"/>
<dbReference type="InParanoid" id="A5DR03"/>
<dbReference type="OMA" id="HATNCIA"/>
<dbReference type="OrthoDB" id="2155246at2759"/>
<dbReference type="Proteomes" id="UP000001997">
    <property type="component" value="Unassembled WGS sequence"/>
</dbReference>
<dbReference type="GO" id="GO:0047407">
    <property type="term" value="F:ADP-ribosyl-[dinitrogen reductase] hydrolase activity"/>
    <property type="evidence" value="ECO:0007669"/>
    <property type="project" value="EnsemblFungi"/>
</dbReference>
<dbReference type="GO" id="GO:0004721">
    <property type="term" value="F:phosphoprotein phosphatase activity"/>
    <property type="evidence" value="ECO:0007669"/>
    <property type="project" value="UniProtKB-KW"/>
</dbReference>
<dbReference type="GO" id="GO:0140291">
    <property type="term" value="P:peptidyl-glutamate ADP-deribosylation"/>
    <property type="evidence" value="ECO:0007669"/>
    <property type="project" value="TreeGrafter"/>
</dbReference>
<dbReference type="CDD" id="cd02901">
    <property type="entry name" value="Macro_Poa1p-like"/>
    <property type="match status" value="1"/>
</dbReference>
<dbReference type="Gene3D" id="3.40.220.10">
    <property type="entry name" value="Leucine Aminopeptidase, subunit E, domain 1"/>
    <property type="match status" value="1"/>
</dbReference>
<dbReference type="InterPro" id="IPR050892">
    <property type="entry name" value="ADP-ribose_metab_enzymes"/>
</dbReference>
<dbReference type="InterPro" id="IPR002589">
    <property type="entry name" value="Macro_dom"/>
</dbReference>
<dbReference type="InterPro" id="IPR043472">
    <property type="entry name" value="Macro_dom-like"/>
</dbReference>
<dbReference type="PANTHER" id="PTHR12521:SF0">
    <property type="entry name" value="ADP-RIBOSE GLYCOHYDROLASE OARD1"/>
    <property type="match status" value="1"/>
</dbReference>
<dbReference type="PANTHER" id="PTHR12521">
    <property type="entry name" value="PROTEIN C6ORF130"/>
    <property type="match status" value="1"/>
</dbReference>
<dbReference type="Pfam" id="PF01661">
    <property type="entry name" value="Macro"/>
    <property type="match status" value="1"/>
</dbReference>
<dbReference type="SMART" id="SM00506">
    <property type="entry name" value="A1pp"/>
    <property type="match status" value="1"/>
</dbReference>
<dbReference type="SUPFAM" id="SSF52949">
    <property type="entry name" value="Macro domain-like"/>
    <property type="match status" value="1"/>
</dbReference>
<dbReference type="PROSITE" id="PS51154">
    <property type="entry name" value="MACRO"/>
    <property type="match status" value="1"/>
</dbReference>
<evidence type="ECO:0000250" key="1"/>
<evidence type="ECO:0000255" key="2">
    <source>
        <dbReference type="PROSITE-ProRule" id="PRU00490"/>
    </source>
</evidence>
<evidence type="ECO:0000305" key="3"/>
<feature type="chain" id="PRO_0000324911" description="ADP-ribose 1''-phosphate phosphatase">
    <location>
        <begin position="1"/>
        <end position="175"/>
    </location>
</feature>
<feature type="domain" description="Macro" evidence="2">
    <location>
        <begin position="1"/>
        <end position="175"/>
    </location>
</feature>
<feature type="binding site" evidence="1">
    <location>
        <begin position="9"/>
        <end position="11"/>
    </location>
    <ligand>
        <name>substrate</name>
    </ligand>
</feature>
<feature type="binding site" evidence="1">
    <location>
        <begin position="25"/>
        <end position="27"/>
    </location>
    <ligand>
        <name>substrate</name>
    </ligand>
</feature>
<feature type="binding site" evidence="1">
    <location>
        <begin position="32"/>
        <end position="37"/>
    </location>
    <ligand>
        <name>substrate</name>
    </ligand>
</feature>
<feature type="binding site" evidence="1">
    <location>
        <begin position="147"/>
        <end position="153"/>
    </location>
    <ligand>
        <name>substrate</name>
    </ligand>
</feature>
<sequence length="175" mass="19225">MSKLNYIKGDLFSHKSSASSILAHACNCRGSWGAGVAAIFKKQFPSTYKLYVEHCKKHASNPSGLLGSTYLIKSESSDPGNSGRENVAYVACMFTSDAFGRRKNSADDIVENTDKSMLHLESQLAELAKTEPIEQQDGVNVVNMPKINAGLFNVPWEETEAVLKKHQVLINVYVI</sequence>
<reference key="1">
    <citation type="journal article" date="2009" name="Nature">
        <title>Evolution of pathogenicity and sexual reproduction in eight Candida genomes.</title>
        <authorList>
            <person name="Butler G."/>
            <person name="Rasmussen M.D."/>
            <person name="Lin M.F."/>
            <person name="Santos M.A.S."/>
            <person name="Sakthikumar S."/>
            <person name="Munro C.A."/>
            <person name="Rheinbay E."/>
            <person name="Grabherr M."/>
            <person name="Forche A."/>
            <person name="Reedy J.L."/>
            <person name="Agrafioti I."/>
            <person name="Arnaud M.B."/>
            <person name="Bates S."/>
            <person name="Brown A.J.P."/>
            <person name="Brunke S."/>
            <person name="Costanzo M.C."/>
            <person name="Fitzpatrick D.A."/>
            <person name="de Groot P.W.J."/>
            <person name="Harris D."/>
            <person name="Hoyer L.L."/>
            <person name="Hube B."/>
            <person name="Klis F.M."/>
            <person name="Kodira C."/>
            <person name="Lennard N."/>
            <person name="Logue M.E."/>
            <person name="Martin R."/>
            <person name="Neiman A.M."/>
            <person name="Nikolaou E."/>
            <person name="Quail M.A."/>
            <person name="Quinn J."/>
            <person name="Santos M.C."/>
            <person name="Schmitzberger F.F."/>
            <person name="Sherlock G."/>
            <person name="Shah P."/>
            <person name="Silverstein K.A.T."/>
            <person name="Skrzypek M.S."/>
            <person name="Soll D."/>
            <person name="Staggs R."/>
            <person name="Stansfield I."/>
            <person name="Stumpf M.P.H."/>
            <person name="Sudbery P.E."/>
            <person name="Srikantha T."/>
            <person name="Zeng Q."/>
            <person name="Berman J."/>
            <person name="Berriman M."/>
            <person name="Heitman J."/>
            <person name="Gow N.A.R."/>
            <person name="Lorenz M.C."/>
            <person name="Birren B.W."/>
            <person name="Kellis M."/>
            <person name="Cuomo C.A."/>
        </authorList>
    </citation>
    <scope>NUCLEOTIDE SEQUENCE [LARGE SCALE GENOMIC DNA]</scope>
    <source>
        <strain>ATCC 6260 / CBS 566 / DSM 6381 / JCM 1539 / NBRC 10279 / NRRL Y-324</strain>
    </source>
</reference>
<comment type="function">
    <text evidence="1">Highly specific phosphatase involved in the metabolism of ADP-ribose 1''-phosphate (Appr1p) which is produced as a consequence of tRNA splicing.</text>
</comment>
<comment type="catalytic activity">
    <reaction>
        <text>ADP-alpha-D-ribose 1''-phosphate + H2O = ADP-D-ribose + phosphate</text>
        <dbReference type="Rhea" id="RHEA:25029"/>
        <dbReference type="ChEBI" id="CHEBI:15377"/>
        <dbReference type="ChEBI" id="CHEBI:43474"/>
        <dbReference type="ChEBI" id="CHEBI:57967"/>
        <dbReference type="ChEBI" id="CHEBI:58753"/>
        <dbReference type="EC" id="3.1.3.84"/>
    </reaction>
</comment>
<comment type="similarity">
    <text evidence="3">Belongs to the POA1 family.</text>
</comment>
<accession>A5DR03</accession>
<gene>
    <name type="primary">POA1</name>
    <name type="ORF">PGUG_05704</name>
</gene>
<proteinExistence type="inferred from homology"/>
<protein>
    <recommendedName>
        <fullName>ADP-ribose 1''-phosphate phosphatase</fullName>
        <ecNumber>3.1.3.84</ecNumber>
    </recommendedName>
</protein>